<comment type="catalytic activity">
    <reaction evidence="1">
        <text>1-(2-carboxyphenylamino)-1-deoxy-D-ribulose 5-phosphate + H(+) = (1S,2R)-1-C-(indol-3-yl)glycerol 3-phosphate + CO2 + H2O</text>
        <dbReference type="Rhea" id="RHEA:23476"/>
        <dbReference type="ChEBI" id="CHEBI:15377"/>
        <dbReference type="ChEBI" id="CHEBI:15378"/>
        <dbReference type="ChEBI" id="CHEBI:16526"/>
        <dbReference type="ChEBI" id="CHEBI:58613"/>
        <dbReference type="ChEBI" id="CHEBI:58866"/>
        <dbReference type="EC" id="4.1.1.48"/>
    </reaction>
</comment>
<comment type="pathway">
    <text evidence="1">Amino-acid biosynthesis; L-tryptophan biosynthesis; L-tryptophan from chorismate: step 4/5.</text>
</comment>
<comment type="similarity">
    <text evidence="1">Belongs to the TrpC family.</text>
</comment>
<keyword id="KW-0028">Amino-acid biosynthesis</keyword>
<keyword id="KW-0057">Aromatic amino acid biosynthesis</keyword>
<keyword id="KW-0210">Decarboxylase</keyword>
<keyword id="KW-0456">Lyase</keyword>
<keyword id="KW-0822">Tryptophan biosynthesis</keyword>
<dbReference type="EC" id="4.1.1.48" evidence="1"/>
<dbReference type="EMBL" id="BA000018">
    <property type="protein sequence ID" value="BAB42462.1"/>
    <property type="molecule type" value="Genomic_DNA"/>
</dbReference>
<dbReference type="PIR" id="B89913">
    <property type="entry name" value="B89913"/>
</dbReference>
<dbReference type="RefSeq" id="WP_000153613.1">
    <property type="nucleotide sequence ID" value="NC_002745.2"/>
</dbReference>
<dbReference type="SMR" id="P66991"/>
<dbReference type="EnsemblBacteria" id="BAB42462">
    <property type="protein sequence ID" value="BAB42462"/>
    <property type="gene ID" value="BAB42462"/>
</dbReference>
<dbReference type="KEGG" id="sau:SA1202"/>
<dbReference type="HOGENOM" id="CLU_034247_2_1_9"/>
<dbReference type="UniPathway" id="UPA00035">
    <property type="reaction ID" value="UER00043"/>
</dbReference>
<dbReference type="GO" id="GO:0004425">
    <property type="term" value="F:indole-3-glycerol-phosphate synthase activity"/>
    <property type="evidence" value="ECO:0007669"/>
    <property type="project" value="UniProtKB-UniRule"/>
</dbReference>
<dbReference type="GO" id="GO:0004640">
    <property type="term" value="F:phosphoribosylanthranilate isomerase activity"/>
    <property type="evidence" value="ECO:0007669"/>
    <property type="project" value="TreeGrafter"/>
</dbReference>
<dbReference type="GO" id="GO:0000162">
    <property type="term" value="P:L-tryptophan biosynthetic process"/>
    <property type="evidence" value="ECO:0007669"/>
    <property type="project" value="UniProtKB-UniRule"/>
</dbReference>
<dbReference type="CDD" id="cd00331">
    <property type="entry name" value="IGPS"/>
    <property type="match status" value="1"/>
</dbReference>
<dbReference type="FunFam" id="3.20.20.70:FF:000212">
    <property type="entry name" value="Indole-3-glycerol phosphate synthase"/>
    <property type="match status" value="1"/>
</dbReference>
<dbReference type="Gene3D" id="3.20.20.70">
    <property type="entry name" value="Aldolase class I"/>
    <property type="match status" value="1"/>
</dbReference>
<dbReference type="HAMAP" id="MF_00134_B">
    <property type="entry name" value="IGPS_B"/>
    <property type="match status" value="1"/>
</dbReference>
<dbReference type="InterPro" id="IPR013785">
    <property type="entry name" value="Aldolase_TIM"/>
</dbReference>
<dbReference type="InterPro" id="IPR045186">
    <property type="entry name" value="Indole-3-glycerol_P_synth"/>
</dbReference>
<dbReference type="InterPro" id="IPR013798">
    <property type="entry name" value="Indole-3-glycerol_P_synth_dom"/>
</dbReference>
<dbReference type="InterPro" id="IPR001468">
    <property type="entry name" value="Indole-3-GlycerolPSynthase_CS"/>
</dbReference>
<dbReference type="InterPro" id="IPR011060">
    <property type="entry name" value="RibuloseP-bd_barrel"/>
</dbReference>
<dbReference type="NCBIfam" id="NF001371">
    <property type="entry name" value="PRK00278.1-3"/>
    <property type="match status" value="1"/>
</dbReference>
<dbReference type="PANTHER" id="PTHR22854:SF2">
    <property type="entry name" value="INDOLE-3-GLYCEROL-PHOSPHATE SYNTHASE"/>
    <property type="match status" value="1"/>
</dbReference>
<dbReference type="PANTHER" id="PTHR22854">
    <property type="entry name" value="TRYPTOPHAN BIOSYNTHESIS PROTEIN"/>
    <property type="match status" value="1"/>
</dbReference>
<dbReference type="Pfam" id="PF00218">
    <property type="entry name" value="IGPS"/>
    <property type="match status" value="1"/>
</dbReference>
<dbReference type="SUPFAM" id="SSF51366">
    <property type="entry name" value="Ribulose-phoshate binding barrel"/>
    <property type="match status" value="1"/>
</dbReference>
<dbReference type="PROSITE" id="PS00614">
    <property type="entry name" value="IGPS"/>
    <property type="match status" value="1"/>
</dbReference>
<name>TRPC_STAAN</name>
<reference key="1">
    <citation type="journal article" date="2001" name="Lancet">
        <title>Whole genome sequencing of meticillin-resistant Staphylococcus aureus.</title>
        <authorList>
            <person name="Kuroda M."/>
            <person name="Ohta T."/>
            <person name="Uchiyama I."/>
            <person name="Baba T."/>
            <person name="Yuzawa H."/>
            <person name="Kobayashi I."/>
            <person name="Cui L."/>
            <person name="Oguchi A."/>
            <person name="Aoki K."/>
            <person name="Nagai Y."/>
            <person name="Lian J.-Q."/>
            <person name="Ito T."/>
            <person name="Kanamori M."/>
            <person name="Matsumaru H."/>
            <person name="Maruyama A."/>
            <person name="Murakami H."/>
            <person name="Hosoyama A."/>
            <person name="Mizutani-Ui Y."/>
            <person name="Takahashi N.K."/>
            <person name="Sawano T."/>
            <person name="Inoue R."/>
            <person name="Kaito C."/>
            <person name="Sekimizu K."/>
            <person name="Hirakawa H."/>
            <person name="Kuhara S."/>
            <person name="Goto S."/>
            <person name="Yabuzaki J."/>
            <person name="Kanehisa M."/>
            <person name="Yamashita A."/>
            <person name="Oshima K."/>
            <person name="Furuya K."/>
            <person name="Yoshino C."/>
            <person name="Shiba T."/>
            <person name="Hattori M."/>
            <person name="Ogasawara N."/>
            <person name="Hayashi H."/>
            <person name="Hiramatsu K."/>
        </authorList>
    </citation>
    <scope>NUCLEOTIDE SEQUENCE [LARGE SCALE GENOMIC DNA]</scope>
    <source>
        <strain>N315</strain>
    </source>
</reference>
<evidence type="ECO:0000255" key="1">
    <source>
        <dbReference type="HAMAP-Rule" id="MF_00134"/>
    </source>
</evidence>
<organism>
    <name type="scientific">Staphylococcus aureus (strain N315)</name>
    <dbReference type="NCBI Taxonomy" id="158879"/>
    <lineage>
        <taxon>Bacteria</taxon>
        <taxon>Bacillati</taxon>
        <taxon>Bacillota</taxon>
        <taxon>Bacilli</taxon>
        <taxon>Bacillales</taxon>
        <taxon>Staphylococcaceae</taxon>
        <taxon>Staphylococcus</taxon>
    </lineage>
</organism>
<protein>
    <recommendedName>
        <fullName evidence="1">Indole-3-glycerol phosphate synthase</fullName>
        <shortName evidence="1">IGPS</shortName>
        <ecNumber evidence="1">4.1.1.48</ecNumber>
    </recommendedName>
</protein>
<sequence length="260" mass="29509">MTILAEIVKYKQSLLQNGYYQDKLNTLKSVKIQNKKSFINAIEKEPKLAIIAEIKSKSPTVNDLPERDLSQQISDYEKYGANAVSILTDEKYFGGSFERLQALTTKTTLPVLCKDFIIDPLQIDVAKQAGASMILLIVNILSDKQLKDLYNYAISQNLEVLIEVHDRHELERAYKVNAKLIGVNNRDLKRFVTNVEHTNTILENKKPNHHYISESGIHDASDVRKILHSGIDGLLIGEALMRCDNLSEFLPQLKMQKVKS</sequence>
<accession>P66991</accession>
<accession>Q99UB1</accession>
<gene>
    <name evidence="1" type="primary">trpC</name>
    <name type="ordered locus">SA1202</name>
</gene>
<feature type="chain" id="PRO_0000154251" description="Indole-3-glycerol phosphate synthase">
    <location>
        <begin position="1"/>
        <end position="260"/>
    </location>
</feature>
<proteinExistence type="inferred from homology"/>